<reference key="1">
    <citation type="journal article" date="2006" name="Nat. Genet.">
        <title>The multidrug-resistant human pathogen Clostridium difficile has a highly mobile, mosaic genome.</title>
        <authorList>
            <person name="Sebaihia M."/>
            <person name="Wren B.W."/>
            <person name="Mullany P."/>
            <person name="Fairweather N.F."/>
            <person name="Minton N."/>
            <person name="Stabler R."/>
            <person name="Thomson N.R."/>
            <person name="Roberts A.P."/>
            <person name="Cerdeno-Tarraga A.M."/>
            <person name="Wang H."/>
            <person name="Holden M.T.G."/>
            <person name="Wright A."/>
            <person name="Churcher C."/>
            <person name="Quail M.A."/>
            <person name="Baker S."/>
            <person name="Bason N."/>
            <person name="Brooks K."/>
            <person name="Chillingworth T."/>
            <person name="Cronin A."/>
            <person name="Davis P."/>
            <person name="Dowd L."/>
            <person name="Fraser A."/>
            <person name="Feltwell T."/>
            <person name="Hance Z."/>
            <person name="Holroyd S."/>
            <person name="Jagels K."/>
            <person name="Moule S."/>
            <person name="Mungall K."/>
            <person name="Price C."/>
            <person name="Rabbinowitsch E."/>
            <person name="Sharp S."/>
            <person name="Simmonds M."/>
            <person name="Stevens K."/>
            <person name="Unwin L."/>
            <person name="Whithead S."/>
            <person name="Dupuy B."/>
            <person name="Dougan G."/>
            <person name="Barrell B."/>
            <person name="Parkhill J."/>
        </authorList>
    </citation>
    <scope>NUCLEOTIDE SEQUENCE [LARGE SCALE GENOMIC DNA]</scope>
    <source>
        <strain>630</strain>
    </source>
</reference>
<accession>Q18CG0</accession>
<protein>
    <recommendedName>
        <fullName evidence="1">Large ribosomal subunit protein uL3</fullName>
    </recommendedName>
    <alternativeName>
        <fullName evidence="3">50S ribosomal protein L3</fullName>
    </alternativeName>
</protein>
<name>RL3_CLOD6</name>
<organism>
    <name type="scientific">Clostridioides difficile (strain 630)</name>
    <name type="common">Peptoclostridium difficile</name>
    <dbReference type="NCBI Taxonomy" id="272563"/>
    <lineage>
        <taxon>Bacteria</taxon>
        <taxon>Bacillati</taxon>
        <taxon>Bacillota</taxon>
        <taxon>Clostridia</taxon>
        <taxon>Peptostreptococcales</taxon>
        <taxon>Peptostreptococcaceae</taxon>
        <taxon>Clostridioides</taxon>
    </lineage>
</organism>
<sequence length="209" mass="22327">MKGILGKKVGMTQIFTDKGVVIPVTAVEAGPMVVTQIKTVDKDGYNAIQIGFEDAKEKALNKPKKGHLAAANVLKKHLKEFRVDSVEGYTVGQEIKADVFEAGAKIDVTGISKGKGFQGPIKRHGQSRGPETHGSRYHRRPGSMGACSYPGRVFKNKKLAGHMGSVKVTVQNLEVVKVDADKNLILVKGAIPGAKGSVVTIKEAIKVSK</sequence>
<evidence type="ECO:0000255" key="1">
    <source>
        <dbReference type="HAMAP-Rule" id="MF_01325"/>
    </source>
</evidence>
<evidence type="ECO:0000256" key="2">
    <source>
        <dbReference type="SAM" id="MobiDB-lite"/>
    </source>
</evidence>
<evidence type="ECO:0000305" key="3"/>
<feature type="chain" id="PRO_1000086433" description="Large ribosomal subunit protein uL3">
    <location>
        <begin position="1"/>
        <end position="209"/>
    </location>
</feature>
<feature type="region of interest" description="Disordered" evidence="2">
    <location>
        <begin position="117"/>
        <end position="142"/>
    </location>
</feature>
<comment type="function">
    <text evidence="1">One of the primary rRNA binding proteins, it binds directly near the 3'-end of the 23S rRNA, where it nucleates assembly of the 50S subunit.</text>
</comment>
<comment type="subunit">
    <text evidence="1">Part of the 50S ribosomal subunit. Forms a cluster with proteins L14 and L19.</text>
</comment>
<comment type="similarity">
    <text evidence="1">Belongs to the universal ribosomal protein uL3 family.</text>
</comment>
<dbReference type="EMBL" id="AM180355">
    <property type="protein sequence ID" value="CAJ66888.1"/>
    <property type="molecule type" value="Genomic_DNA"/>
</dbReference>
<dbReference type="RefSeq" id="WP_003421173.1">
    <property type="nucleotide sequence ID" value="NZ_JAUPES010000043.1"/>
</dbReference>
<dbReference type="RefSeq" id="YP_001086537.1">
    <property type="nucleotide sequence ID" value="NC_009089.1"/>
</dbReference>
<dbReference type="SMR" id="Q18CG0"/>
<dbReference type="STRING" id="272563.CD630_00730"/>
<dbReference type="EnsemblBacteria" id="CAJ66888">
    <property type="protein sequence ID" value="CAJ66888"/>
    <property type="gene ID" value="CD630_00730"/>
</dbReference>
<dbReference type="GeneID" id="66352571"/>
<dbReference type="KEGG" id="cdf:CD630_00730"/>
<dbReference type="KEGG" id="pdc:CDIF630_00139"/>
<dbReference type="PATRIC" id="fig|272563.120.peg.79"/>
<dbReference type="eggNOG" id="COG0087">
    <property type="taxonomic scope" value="Bacteria"/>
</dbReference>
<dbReference type="OrthoDB" id="9806135at2"/>
<dbReference type="PhylomeDB" id="Q18CG0"/>
<dbReference type="BioCyc" id="PDIF272563:G12WB-127-MONOMER"/>
<dbReference type="Proteomes" id="UP000001978">
    <property type="component" value="Chromosome"/>
</dbReference>
<dbReference type="GO" id="GO:0022625">
    <property type="term" value="C:cytosolic large ribosomal subunit"/>
    <property type="evidence" value="ECO:0007669"/>
    <property type="project" value="TreeGrafter"/>
</dbReference>
<dbReference type="GO" id="GO:0019843">
    <property type="term" value="F:rRNA binding"/>
    <property type="evidence" value="ECO:0007669"/>
    <property type="project" value="UniProtKB-UniRule"/>
</dbReference>
<dbReference type="GO" id="GO:0003735">
    <property type="term" value="F:structural constituent of ribosome"/>
    <property type="evidence" value="ECO:0007669"/>
    <property type="project" value="InterPro"/>
</dbReference>
<dbReference type="GO" id="GO:0006412">
    <property type="term" value="P:translation"/>
    <property type="evidence" value="ECO:0007669"/>
    <property type="project" value="UniProtKB-UniRule"/>
</dbReference>
<dbReference type="FunFam" id="2.40.30.10:FF:000004">
    <property type="entry name" value="50S ribosomal protein L3"/>
    <property type="match status" value="1"/>
</dbReference>
<dbReference type="FunFam" id="3.30.160.810:FF:000001">
    <property type="entry name" value="50S ribosomal protein L3"/>
    <property type="match status" value="1"/>
</dbReference>
<dbReference type="Gene3D" id="3.30.160.810">
    <property type="match status" value="1"/>
</dbReference>
<dbReference type="Gene3D" id="2.40.30.10">
    <property type="entry name" value="Translation factors"/>
    <property type="match status" value="1"/>
</dbReference>
<dbReference type="HAMAP" id="MF_01325_B">
    <property type="entry name" value="Ribosomal_uL3_B"/>
    <property type="match status" value="1"/>
</dbReference>
<dbReference type="InterPro" id="IPR000597">
    <property type="entry name" value="Ribosomal_uL3"/>
</dbReference>
<dbReference type="InterPro" id="IPR019927">
    <property type="entry name" value="Ribosomal_uL3_bac/org-type"/>
</dbReference>
<dbReference type="InterPro" id="IPR019926">
    <property type="entry name" value="Ribosomal_uL3_CS"/>
</dbReference>
<dbReference type="InterPro" id="IPR009000">
    <property type="entry name" value="Transl_B-barrel_sf"/>
</dbReference>
<dbReference type="NCBIfam" id="TIGR03625">
    <property type="entry name" value="L3_bact"/>
    <property type="match status" value="1"/>
</dbReference>
<dbReference type="PANTHER" id="PTHR11229">
    <property type="entry name" value="50S RIBOSOMAL PROTEIN L3"/>
    <property type="match status" value="1"/>
</dbReference>
<dbReference type="PANTHER" id="PTHR11229:SF16">
    <property type="entry name" value="LARGE RIBOSOMAL SUBUNIT PROTEIN UL3C"/>
    <property type="match status" value="1"/>
</dbReference>
<dbReference type="Pfam" id="PF00297">
    <property type="entry name" value="Ribosomal_L3"/>
    <property type="match status" value="1"/>
</dbReference>
<dbReference type="SUPFAM" id="SSF50447">
    <property type="entry name" value="Translation proteins"/>
    <property type="match status" value="1"/>
</dbReference>
<dbReference type="PROSITE" id="PS00474">
    <property type="entry name" value="RIBOSOMAL_L3"/>
    <property type="match status" value="1"/>
</dbReference>
<gene>
    <name evidence="1" type="primary">rplC</name>
    <name type="ordered locus">CD630_00730</name>
</gene>
<proteinExistence type="inferred from homology"/>
<keyword id="KW-1185">Reference proteome</keyword>
<keyword id="KW-0687">Ribonucleoprotein</keyword>
<keyword id="KW-0689">Ribosomal protein</keyword>
<keyword id="KW-0694">RNA-binding</keyword>
<keyword id="KW-0699">rRNA-binding</keyword>